<accession>C0PWL6</accession>
<organism>
    <name type="scientific">Salmonella paratyphi C (strain RKS4594)</name>
    <dbReference type="NCBI Taxonomy" id="476213"/>
    <lineage>
        <taxon>Bacteria</taxon>
        <taxon>Pseudomonadati</taxon>
        <taxon>Pseudomonadota</taxon>
        <taxon>Gammaproteobacteria</taxon>
        <taxon>Enterobacterales</taxon>
        <taxon>Enterobacteriaceae</taxon>
        <taxon>Salmonella</taxon>
    </lineage>
</organism>
<protein>
    <recommendedName>
        <fullName evidence="1">S-ribosylhomocysteine lyase</fullName>
        <ecNumber evidence="1">4.4.1.21</ecNumber>
    </recommendedName>
    <alternativeName>
        <fullName evidence="1">AI-2 synthesis protein</fullName>
    </alternativeName>
    <alternativeName>
        <fullName evidence="1">Autoinducer-2 production protein LuxS</fullName>
    </alternativeName>
</protein>
<reference key="1">
    <citation type="journal article" date="2009" name="PLoS ONE">
        <title>Salmonella paratyphi C: genetic divergence from Salmonella choleraesuis and pathogenic convergence with Salmonella typhi.</title>
        <authorList>
            <person name="Liu W.-Q."/>
            <person name="Feng Y."/>
            <person name="Wang Y."/>
            <person name="Zou Q.-H."/>
            <person name="Chen F."/>
            <person name="Guo J.-T."/>
            <person name="Peng Y.-H."/>
            <person name="Jin Y."/>
            <person name="Li Y.-G."/>
            <person name="Hu S.-N."/>
            <person name="Johnston R.N."/>
            <person name="Liu G.-R."/>
            <person name="Liu S.-L."/>
        </authorList>
    </citation>
    <scope>NUCLEOTIDE SEQUENCE [LARGE SCALE GENOMIC DNA]</scope>
    <source>
        <strain>RKS4594</strain>
    </source>
</reference>
<keyword id="KW-0071">Autoinducer synthesis</keyword>
<keyword id="KW-0408">Iron</keyword>
<keyword id="KW-0456">Lyase</keyword>
<keyword id="KW-0479">Metal-binding</keyword>
<keyword id="KW-0673">Quorum sensing</keyword>
<gene>
    <name evidence="1" type="primary">luxS</name>
    <name type="ordered locus">SPC_2863</name>
</gene>
<name>LUXS_SALPC</name>
<proteinExistence type="inferred from homology"/>
<evidence type="ECO:0000255" key="1">
    <source>
        <dbReference type="HAMAP-Rule" id="MF_00091"/>
    </source>
</evidence>
<dbReference type="EC" id="4.4.1.21" evidence="1"/>
<dbReference type="EMBL" id="CP000857">
    <property type="protein sequence ID" value="ACN46958.1"/>
    <property type="molecule type" value="Genomic_DNA"/>
</dbReference>
<dbReference type="RefSeq" id="WP_001130194.1">
    <property type="nucleotide sequence ID" value="NC_012125.1"/>
</dbReference>
<dbReference type="SMR" id="C0PWL6"/>
<dbReference type="KEGG" id="sei:SPC_2863"/>
<dbReference type="HOGENOM" id="CLU_107531_2_0_6"/>
<dbReference type="Proteomes" id="UP000001599">
    <property type="component" value="Chromosome"/>
</dbReference>
<dbReference type="GO" id="GO:0005506">
    <property type="term" value="F:iron ion binding"/>
    <property type="evidence" value="ECO:0007669"/>
    <property type="project" value="InterPro"/>
</dbReference>
<dbReference type="GO" id="GO:0043768">
    <property type="term" value="F:S-ribosylhomocysteine lyase activity"/>
    <property type="evidence" value="ECO:0007669"/>
    <property type="project" value="UniProtKB-UniRule"/>
</dbReference>
<dbReference type="GO" id="GO:0009372">
    <property type="term" value="P:quorum sensing"/>
    <property type="evidence" value="ECO:0007669"/>
    <property type="project" value="UniProtKB-UniRule"/>
</dbReference>
<dbReference type="FunFam" id="3.30.1360.80:FF:000001">
    <property type="entry name" value="S-ribosylhomocysteine lyase"/>
    <property type="match status" value="1"/>
</dbReference>
<dbReference type="Gene3D" id="3.30.1360.80">
    <property type="entry name" value="S-ribosylhomocysteinase (LuxS)"/>
    <property type="match status" value="1"/>
</dbReference>
<dbReference type="HAMAP" id="MF_00091">
    <property type="entry name" value="LuxS"/>
    <property type="match status" value="1"/>
</dbReference>
<dbReference type="InterPro" id="IPR037005">
    <property type="entry name" value="LuxS_sf"/>
</dbReference>
<dbReference type="InterPro" id="IPR011249">
    <property type="entry name" value="Metalloenz_LuxS/M16"/>
</dbReference>
<dbReference type="InterPro" id="IPR003815">
    <property type="entry name" value="S-ribosylhomocysteinase"/>
</dbReference>
<dbReference type="NCBIfam" id="NF002602">
    <property type="entry name" value="PRK02260.1-2"/>
    <property type="match status" value="1"/>
</dbReference>
<dbReference type="PANTHER" id="PTHR35799">
    <property type="entry name" value="S-RIBOSYLHOMOCYSTEINE LYASE"/>
    <property type="match status" value="1"/>
</dbReference>
<dbReference type="PANTHER" id="PTHR35799:SF1">
    <property type="entry name" value="S-RIBOSYLHOMOCYSTEINE LYASE"/>
    <property type="match status" value="1"/>
</dbReference>
<dbReference type="Pfam" id="PF02664">
    <property type="entry name" value="LuxS"/>
    <property type="match status" value="1"/>
</dbReference>
<dbReference type="PIRSF" id="PIRSF006160">
    <property type="entry name" value="AI2"/>
    <property type="match status" value="1"/>
</dbReference>
<dbReference type="PRINTS" id="PR01487">
    <property type="entry name" value="LUXSPROTEIN"/>
</dbReference>
<dbReference type="SUPFAM" id="SSF63411">
    <property type="entry name" value="LuxS/MPP-like metallohydrolase"/>
    <property type="match status" value="1"/>
</dbReference>
<feature type="chain" id="PRO_1000191036" description="S-ribosylhomocysteine lyase">
    <location>
        <begin position="1"/>
        <end position="171"/>
    </location>
</feature>
<feature type="binding site" evidence="1">
    <location>
        <position position="54"/>
    </location>
    <ligand>
        <name>Fe cation</name>
        <dbReference type="ChEBI" id="CHEBI:24875"/>
    </ligand>
</feature>
<feature type="binding site" evidence="1">
    <location>
        <position position="58"/>
    </location>
    <ligand>
        <name>Fe cation</name>
        <dbReference type="ChEBI" id="CHEBI:24875"/>
    </ligand>
</feature>
<feature type="binding site" evidence="1">
    <location>
        <position position="128"/>
    </location>
    <ligand>
        <name>Fe cation</name>
        <dbReference type="ChEBI" id="CHEBI:24875"/>
    </ligand>
</feature>
<sequence>MPLLDSFAVDHTRMQAPAVRVAKTMNTPHGDAITVFDLRFCIPNKEVMPEKGIHTLEHLFAGFMRDHLNGNGVEIIDISPMGCRTGFYMSLIGTPDEQRVADAWKAAMADVLKVQDQNQIPELNVYQCGTYQMHSLSEAQDIARHILERDVRVNSNKELALPKEKLQELHI</sequence>
<comment type="function">
    <text evidence="1">Involved in the synthesis of autoinducer 2 (AI-2) which is secreted by bacteria and is used to communicate both the cell density and the metabolic potential of the environment. The regulation of gene expression in response to changes in cell density is called quorum sensing. Catalyzes the transformation of S-ribosylhomocysteine (RHC) to homocysteine (HC) and 4,5-dihydroxy-2,3-pentadione (DPD).</text>
</comment>
<comment type="catalytic activity">
    <reaction evidence="1">
        <text>S-(5-deoxy-D-ribos-5-yl)-L-homocysteine = (S)-4,5-dihydroxypentane-2,3-dione + L-homocysteine</text>
        <dbReference type="Rhea" id="RHEA:17753"/>
        <dbReference type="ChEBI" id="CHEBI:29484"/>
        <dbReference type="ChEBI" id="CHEBI:58195"/>
        <dbReference type="ChEBI" id="CHEBI:58199"/>
        <dbReference type="EC" id="4.4.1.21"/>
    </reaction>
</comment>
<comment type="cofactor">
    <cofactor evidence="1">
        <name>Fe cation</name>
        <dbReference type="ChEBI" id="CHEBI:24875"/>
    </cofactor>
    <text evidence="1">Binds 1 Fe cation per subunit.</text>
</comment>
<comment type="subunit">
    <text evidence="1">Homodimer.</text>
</comment>
<comment type="similarity">
    <text evidence="1">Belongs to the LuxS family.</text>
</comment>